<dbReference type="EC" id="3.1.1.22" evidence="1"/>
<dbReference type="EMBL" id="CP000529">
    <property type="protein sequence ID" value="ABM39281.1"/>
    <property type="status" value="ALT_INIT"/>
    <property type="molecule type" value="Genomic_DNA"/>
</dbReference>
<dbReference type="RefSeq" id="WP_041376840.1">
    <property type="nucleotide sequence ID" value="NC_008781.1"/>
</dbReference>
<dbReference type="STRING" id="365044.Pnap_3987"/>
<dbReference type="ESTHER" id="polna-hboh">
    <property type="family name" value="OHBut_olig_hydro_put"/>
</dbReference>
<dbReference type="KEGG" id="pna:Pnap_3987"/>
<dbReference type="eggNOG" id="ENOG502Z8QU">
    <property type="taxonomic scope" value="Bacteria"/>
</dbReference>
<dbReference type="HOGENOM" id="CLU_420258_0_0_4"/>
<dbReference type="OrthoDB" id="4294477at2"/>
<dbReference type="UniPathway" id="UPA00863"/>
<dbReference type="Proteomes" id="UP000000644">
    <property type="component" value="Chromosome"/>
</dbReference>
<dbReference type="GO" id="GO:0005615">
    <property type="term" value="C:extracellular space"/>
    <property type="evidence" value="ECO:0007669"/>
    <property type="project" value="InterPro"/>
</dbReference>
<dbReference type="GO" id="GO:0047989">
    <property type="term" value="F:hydroxybutyrate-dimer hydrolase activity"/>
    <property type="evidence" value="ECO:0007669"/>
    <property type="project" value="UniProtKB-UniRule"/>
</dbReference>
<dbReference type="GO" id="GO:0019605">
    <property type="term" value="P:butyrate metabolic process"/>
    <property type="evidence" value="ECO:0007669"/>
    <property type="project" value="UniProtKB-UniRule"/>
</dbReference>
<dbReference type="HAMAP" id="MF_01906">
    <property type="entry name" value="3HBOH"/>
    <property type="match status" value="1"/>
</dbReference>
<dbReference type="InterPro" id="IPR016582">
    <property type="entry name" value="OHBut_olig_hydro_put"/>
</dbReference>
<dbReference type="Pfam" id="PF10605">
    <property type="entry name" value="3HBOH"/>
    <property type="match status" value="1"/>
</dbReference>
<dbReference type="PIRSF" id="PIRSF011409">
    <property type="entry name" value="HObutyrate_olig_hydrol"/>
    <property type="match status" value="1"/>
</dbReference>
<organism>
    <name type="scientific">Polaromonas naphthalenivorans (strain CJ2)</name>
    <dbReference type="NCBI Taxonomy" id="365044"/>
    <lineage>
        <taxon>Bacteria</taxon>
        <taxon>Pseudomonadati</taxon>
        <taxon>Pseudomonadota</taxon>
        <taxon>Betaproteobacteria</taxon>
        <taxon>Burkholderiales</taxon>
        <taxon>Comamonadaceae</taxon>
        <taxon>Polaromonas</taxon>
    </lineage>
</organism>
<protein>
    <recommendedName>
        <fullName evidence="1">D-(-)-3-hydroxybutyrate oligomer hydrolase</fullName>
        <shortName evidence="1">3HB-oligomer hydrolase</shortName>
        <shortName evidence="1">3HBOH</shortName>
        <ecNumber evidence="1">3.1.1.22</ecNumber>
    </recommendedName>
</protein>
<evidence type="ECO:0000255" key="1">
    <source>
        <dbReference type="HAMAP-Rule" id="MF_01906"/>
    </source>
</evidence>
<evidence type="ECO:0000305" key="2"/>
<proteinExistence type="inferred from homology"/>
<comment type="function">
    <text evidence="1">Participates in the degradation of poly-3-hydroxybutyrate (PHB). It works downstream of poly(3-hydroxybutyrate) depolymerase, hydrolyzing D(-)-3-hydroxybutyrate oligomers of various length (3HB-oligomers) into 3HB-monomers.</text>
</comment>
<comment type="catalytic activity">
    <reaction evidence="1">
        <text>(3R)-hydroxybutanoate dimer + H2O = 2 (R)-3-hydroxybutanoate + H(+)</text>
        <dbReference type="Rhea" id="RHEA:10172"/>
        <dbReference type="ChEBI" id="CHEBI:10979"/>
        <dbReference type="ChEBI" id="CHEBI:10983"/>
        <dbReference type="ChEBI" id="CHEBI:15377"/>
        <dbReference type="ChEBI" id="CHEBI:15378"/>
        <dbReference type="EC" id="3.1.1.22"/>
    </reaction>
</comment>
<comment type="pathway">
    <text evidence="1">Lipid metabolism; butanoate metabolism.</text>
</comment>
<comment type="subcellular location">
    <subcellularLocation>
        <location evidence="1">Secreted</location>
    </subcellularLocation>
</comment>
<comment type="similarity">
    <text evidence="1">Belongs to the D-(-)-3-hydroxybutyrate oligomer hydrolase family.</text>
</comment>
<comment type="sequence caution" evidence="2">
    <conflict type="erroneous initiation">
        <sequence resource="EMBL-CDS" id="ABM39281"/>
    </conflict>
</comment>
<name>HBOH_POLNA</name>
<reference key="1">
    <citation type="journal article" date="2009" name="Environ. Microbiol.">
        <title>The genome of Polaromonas naphthalenivorans strain CJ2, isolated from coal tar-contaminated sediment, reveals physiological and metabolic versatility and evolution through extensive horizontal gene transfer.</title>
        <authorList>
            <person name="Yagi J.M."/>
            <person name="Sims D."/>
            <person name="Brettin T."/>
            <person name="Bruce D."/>
            <person name="Madsen E.L."/>
        </authorList>
    </citation>
    <scope>NUCLEOTIDE SEQUENCE [LARGE SCALE GENOMIC DNA]</scope>
    <source>
        <strain>CJ2</strain>
    </source>
</reference>
<accession>A1VUF3</accession>
<gene>
    <name type="ordered locus">Pnap_3987</name>
</gene>
<keyword id="KW-0378">Hydrolase</keyword>
<keyword id="KW-1185">Reference proteome</keyword>
<keyword id="KW-0964">Secreted</keyword>
<keyword id="KW-0732">Signal</keyword>
<feature type="signal peptide" evidence="1">
    <location>
        <begin position="1"/>
        <end position="27"/>
    </location>
</feature>
<feature type="chain" id="PRO_0000314428" description="D-(-)-3-hydroxybutyrate oligomer hydrolase">
    <location>
        <begin position="28"/>
        <end position="706"/>
    </location>
</feature>
<feature type="active site" description="Charge relay system" evidence="1">
    <location>
        <position position="311"/>
    </location>
</feature>
<sequence length="706" mass="72290">MTIIIAGKNTLTLTSLAAAVLALGACGGNSDPFESKNTKPAYLGAVAIASYDGASDDLLTAGLGKTGLGGTAPAVADPLKPTPAELRRLAIFNNYRAILDISTNGGYGTLYGPNVDAKGVITTGEGKIAGTEYIAYSDDGTGRQNITMMVQVPASFNPANACIVTGTSSGSRGVYGAIGSAGEWGLKNGCAVAYTDKGTGTGIHDLQNNTVNVQNGVRTDAAAAGKNSIFTAELSASERAAFNAATPNRFAVKHAHSQQNPEKDWGKWTLQSVEFAYFVLNEKYGDLARDGATHLKKLTPSNTIVIASSVSNGAGAALAAAEQDTQGLISGVAVAEPEVQLAPDARLSVKRGASVLVGTGKPLYDYFTLANLLQPCAALVSPATNAFNTVNAATATNRCSALKANGLVTGTTTAEQAASALAALVAAGWQPESNVLQASHYSFATLSVGLTYANTYGRFSVKDNLCGFSFAATGAAASATPNAPVPASASALATSFGASNGVPPTIGINIVNNLSAGGPLLDAASLSAGGVQDYNIAGALCMRELATGSSANAVRVRQGMSEVVRSANLRGKPALIVQGRADTLLPVAFTGRPYYGMNKIVEGTASRLSYIEVTNAQHFDAFLAFPGYPERMVPLHRYFIQAMDMMYANLKTGAALPASQVVRTVPRGLTGAVANPIAASNVPPIKTTPAAADQITFANNVVTIAD</sequence>